<name>LECM2_BUNFA</name>
<protein>
    <recommendedName>
        <fullName>C-type lectin BfL-2</fullName>
        <shortName>CTL</shortName>
    </recommendedName>
</protein>
<feature type="signal peptide" evidence="2">
    <location>
        <begin position="1"/>
        <end position="21"/>
    </location>
</feature>
<feature type="chain" id="PRO_0000355259" description="C-type lectin BfL-2">
    <location>
        <begin position="22"/>
        <end position="158"/>
    </location>
</feature>
<feature type="domain" description="C-type lectin" evidence="3">
    <location>
        <begin position="33"/>
        <end position="155"/>
    </location>
</feature>
<feature type="short sequence motif" description="Mannose-binding">
    <location>
        <begin position="119"/>
        <end position="121"/>
    </location>
</feature>
<feature type="binding site" evidence="1">
    <location>
        <position position="127"/>
    </location>
    <ligand>
        <name>Ca(2+)</name>
        <dbReference type="ChEBI" id="CHEBI:29108"/>
    </ligand>
</feature>
<feature type="binding site" evidence="1">
    <location>
        <position position="142"/>
    </location>
    <ligand>
        <name>Ca(2+)</name>
        <dbReference type="ChEBI" id="CHEBI:29108"/>
    </ligand>
</feature>
<feature type="binding site" evidence="1">
    <location>
        <position position="143"/>
    </location>
    <ligand>
        <name>Ca(2+)</name>
        <dbReference type="ChEBI" id="CHEBI:29108"/>
    </ligand>
</feature>
<feature type="glycosylation site" description="N-linked (GlcNAc...) asparagine" evidence="2">
    <location>
        <position position="121"/>
    </location>
</feature>
<feature type="disulfide bond" evidence="3">
    <location>
        <begin position="26"/>
        <end position="37"/>
    </location>
</feature>
<feature type="disulfide bond" evidence="3">
    <location>
        <begin position="54"/>
        <end position="154"/>
    </location>
</feature>
<feature type="disulfide bond" evidence="3">
    <location>
        <begin position="61"/>
        <end position="156"/>
    </location>
</feature>
<feature type="disulfide bond" evidence="3">
    <location>
        <begin position="129"/>
        <end position="146"/>
    </location>
</feature>
<reference key="1">
    <citation type="journal article" date="2001" name="Toxicon">
        <title>Cloning of cDNAs encoding C-type lectins from Elapidae snakes Bungarus fasciatus and Bungarus multicinctus.</title>
        <authorList>
            <person name="Zha H.-G."/>
            <person name="Lee W.-H."/>
            <person name="Zhang Y."/>
        </authorList>
    </citation>
    <scope>NUCLEOTIDE SEQUENCE [MRNA]</scope>
    <source>
        <tissue>Venom gland</tissue>
    </source>
</reference>
<reference key="2">
    <citation type="journal article" date="2006" name="Toxicon">
        <title>Structure-function inferences based on molecular modeling, sequence-based methods and biological data analysis of snake venom lectins.</title>
        <authorList>
            <person name="Abreu P.A."/>
            <person name="Albuquerque M.G."/>
            <person name="Rodrigues C.R."/>
            <person name="Castro H.C."/>
        </authorList>
    </citation>
    <scope>3D-STRUCTURE MODELING</scope>
</reference>
<sequence length="158" mass="18254">MGHFTFIGLCLLAMFLSLSGAECYTCPIDWLPKNGLCYKVFSNPKSWLDAEMFCRKFKPGCHLASIHRDADSADLAEYVSDYLKDDGNVWIGLNDPQKKRTWVWSDRSSSNYFSWNQGEPNNSKNKEYCVHLWAPTGYLKWNDAPCETLHPFICQCKY</sequence>
<organism>
    <name type="scientific">Bungarus fasciatus</name>
    <name type="common">Banded krait</name>
    <name type="synonym">Pseudoboa fasciata</name>
    <dbReference type="NCBI Taxonomy" id="8613"/>
    <lineage>
        <taxon>Eukaryota</taxon>
        <taxon>Metazoa</taxon>
        <taxon>Chordata</taxon>
        <taxon>Craniata</taxon>
        <taxon>Vertebrata</taxon>
        <taxon>Euteleostomi</taxon>
        <taxon>Lepidosauria</taxon>
        <taxon>Squamata</taxon>
        <taxon>Bifurcata</taxon>
        <taxon>Unidentata</taxon>
        <taxon>Episquamata</taxon>
        <taxon>Toxicofera</taxon>
        <taxon>Serpentes</taxon>
        <taxon>Colubroidea</taxon>
        <taxon>Elapidae</taxon>
        <taxon>Bungarinae</taxon>
        <taxon>Bungarus</taxon>
    </lineage>
</organism>
<proteinExistence type="evidence at transcript level"/>
<dbReference type="EMBL" id="AF354271">
    <property type="protein sequence ID" value="AAK43585.1"/>
    <property type="molecule type" value="mRNA"/>
</dbReference>
<dbReference type="SMR" id="Q90WI7"/>
<dbReference type="GO" id="GO:0005576">
    <property type="term" value="C:extracellular region"/>
    <property type="evidence" value="ECO:0007669"/>
    <property type="project" value="UniProtKB-SubCell"/>
</dbReference>
<dbReference type="GO" id="GO:0030246">
    <property type="term" value="F:carbohydrate binding"/>
    <property type="evidence" value="ECO:0007669"/>
    <property type="project" value="UniProtKB-KW"/>
</dbReference>
<dbReference type="GO" id="GO:0046872">
    <property type="term" value="F:metal ion binding"/>
    <property type="evidence" value="ECO:0007669"/>
    <property type="project" value="UniProtKB-KW"/>
</dbReference>
<dbReference type="CDD" id="cd03594">
    <property type="entry name" value="CLECT_REG-1_like"/>
    <property type="match status" value="1"/>
</dbReference>
<dbReference type="FunFam" id="3.10.100.10:FF:000015">
    <property type="entry name" value="C-type lectin Cal"/>
    <property type="match status" value="1"/>
</dbReference>
<dbReference type="Gene3D" id="3.10.100.10">
    <property type="entry name" value="Mannose-Binding Protein A, subunit A"/>
    <property type="match status" value="1"/>
</dbReference>
<dbReference type="InterPro" id="IPR001304">
    <property type="entry name" value="C-type_lectin-like"/>
</dbReference>
<dbReference type="InterPro" id="IPR016186">
    <property type="entry name" value="C-type_lectin-like/link_sf"/>
</dbReference>
<dbReference type="InterPro" id="IPR050111">
    <property type="entry name" value="C-type_lectin/snaclec_domain"/>
</dbReference>
<dbReference type="InterPro" id="IPR018378">
    <property type="entry name" value="C-type_lectin_CS"/>
</dbReference>
<dbReference type="InterPro" id="IPR016187">
    <property type="entry name" value="CTDL_fold"/>
</dbReference>
<dbReference type="PANTHER" id="PTHR22803">
    <property type="entry name" value="MANNOSE, PHOSPHOLIPASE, LECTIN RECEPTOR RELATED"/>
    <property type="match status" value="1"/>
</dbReference>
<dbReference type="Pfam" id="PF00059">
    <property type="entry name" value="Lectin_C"/>
    <property type="match status" value="1"/>
</dbReference>
<dbReference type="PRINTS" id="PR01504">
    <property type="entry name" value="PNCREATITSAP"/>
</dbReference>
<dbReference type="SMART" id="SM00034">
    <property type="entry name" value="CLECT"/>
    <property type="match status" value="1"/>
</dbReference>
<dbReference type="SUPFAM" id="SSF56436">
    <property type="entry name" value="C-type lectin-like"/>
    <property type="match status" value="1"/>
</dbReference>
<dbReference type="PROSITE" id="PS00615">
    <property type="entry name" value="C_TYPE_LECTIN_1"/>
    <property type="match status" value="1"/>
</dbReference>
<dbReference type="PROSITE" id="PS50041">
    <property type="entry name" value="C_TYPE_LECTIN_2"/>
    <property type="match status" value="1"/>
</dbReference>
<comment type="function">
    <text evidence="1">Mannose-binding lectin which recognizes specific carbohydrate structures and agglutinates a variety of animal cells by binding to cell-surface glycoproteins and glycolipids. May be a calcium-dependent lectin (By similarity).</text>
</comment>
<comment type="subunit">
    <text evidence="4">Homodimer; non-covalently linked.</text>
</comment>
<comment type="subcellular location">
    <subcellularLocation>
        <location evidence="1">Secreted</location>
    </subcellularLocation>
</comment>
<comment type="tissue specificity">
    <text>Expressed by the venom gland.</text>
</comment>
<comment type="similarity">
    <text evidence="4">Belongs to the true venom lectin family.</text>
</comment>
<accession>Q90WI7</accession>
<evidence type="ECO:0000250" key="1"/>
<evidence type="ECO:0000255" key="2"/>
<evidence type="ECO:0000255" key="3">
    <source>
        <dbReference type="PROSITE-ProRule" id="PRU00040"/>
    </source>
</evidence>
<evidence type="ECO:0000305" key="4"/>
<keyword id="KW-0106">Calcium</keyword>
<keyword id="KW-1015">Disulfide bond</keyword>
<keyword id="KW-0325">Glycoprotein</keyword>
<keyword id="KW-0430">Lectin</keyword>
<keyword id="KW-0479">Metal-binding</keyword>
<keyword id="KW-0964">Secreted</keyword>
<keyword id="KW-0732">Signal</keyword>